<protein>
    <recommendedName>
        <fullName>Uncharacterized protein MJ0500</fullName>
    </recommendedName>
</protein>
<reference key="1">
    <citation type="journal article" date="1996" name="Science">
        <title>Complete genome sequence of the methanogenic archaeon, Methanococcus jannaschii.</title>
        <authorList>
            <person name="Bult C.J."/>
            <person name="White O."/>
            <person name="Olsen G.J."/>
            <person name="Zhou L."/>
            <person name="Fleischmann R.D."/>
            <person name="Sutton G.G."/>
            <person name="Blake J.A."/>
            <person name="FitzGerald L.M."/>
            <person name="Clayton R.A."/>
            <person name="Gocayne J.D."/>
            <person name="Kerlavage A.R."/>
            <person name="Dougherty B.A."/>
            <person name="Tomb J.-F."/>
            <person name="Adams M.D."/>
            <person name="Reich C.I."/>
            <person name="Overbeek R."/>
            <person name="Kirkness E.F."/>
            <person name="Weinstock K.G."/>
            <person name="Merrick J.M."/>
            <person name="Glodek A."/>
            <person name="Scott J.L."/>
            <person name="Geoghagen N.S.M."/>
            <person name="Weidman J.F."/>
            <person name="Fuhrmann J.L."/>
            <person name="Nguyen D."/>
            <person name="Utterback T.R."/>
            <person name="Kelley J.M."/>
            <person name="Peterson J.D."/>
            <person name="Sadow P.W."/>
            <person name="Hanna M.C."/>
            <person name="Cotton M.D."/>
            <person name="Roberts K.M."/>
            <person name="Hurst M.A."/>
            <person name="Kaine B.P."/>
            <person name="Borodovsky M."/>
            <person name="Klenk H.-P."/>
            <person name="Fraser C.M."/>
            <person name="Smith H.O."/>
            <person name="Woese C.R."/>
            <person name="Venter J.C."/>
        </authorList>
    </citation>
    <scope>NUCLEOTIDE SEQUENCE [LARGE SCALE GENOMIC DNA]</scope>
    <source>
        <strain>ATCC 43067 / DSM 2661 / JAL-1 / JCM 10045 / NBRC 100440</strain>
    </source>
</reference>
<organism>
    <name type="scientific">Methanocaldococcus jannaschii (strain ATCC 43067 / DSM 2661 / JAL-1 / JCM 10045 / NBRC 100440)</name>
    <name type="common">Methanococcus jannaschii</name>
    <dbReference type="NCBI Taxonomy" id="243232"/>
    <lineage>
        <taxon>Archaea</taxon>
        <taxon>Methanobacteriati</taxon>
        <taxon>Methanobacteriota</taxon>
        <taxon>Methanomada group</taxon>
        <taxon>Methanococci</taxon>
        <taxon>Methanococcales</taxon>
        <taxon>Methanocaldococcaceae</taxon>
        <taxon>Methanocaldococcus</taxon>
    </lineage>
</organism>
<gene>
    <name type="ordered locus">MJ0500</name>
</gene>
<accession>Q57923</accession>
<sequence>MSFMIIEEIKERALNLLSEKEEDFKVIDFSFALPYSYVLIESNGKKALGVAMTLLEEYRGHGNRKDLNINKNLEEFINMADSFDIVERTLGVAAINAVSQYYFNFEANGKDAAELVLNRDDIKKIAFVGNMIPVVNMLKKSEKFDIYVFERSPSLLMDGVLSDAFEYRLLPEMDAVFISGTTLLNDTLDFVLDRAKNAKLKILVGPTAQSLPELFKGFGITHIASTKIIDVDKALLYLKFASSSMLFKGASKKYTMEVE</sequence>
<proteinExistence type="predicted"/>
<dbReference type="EMBL" id="L77117">
    <property type="protein sequence ID" value="AAB98491.1"/>
    <property type="molecule type" value="Genomic_DNA"/>
</dbReference>
<dbReference type="PIR" id="D64362">
    <property type="entry name" value="D64362"/>
</dbReference>
<dbReference type="SMR" id="Q57923"/>
<dbReference type="STRING" id="243232.MJ_0500"/>
<dbReference type="PaxDb" id="243232-MJ_0500"/>
<dbReference type="EnsemblBacteria" id="AAB98491">
    <property type="protein sequence ID" value="AAB98491"/>
    <property type="gene ID" value="MJ_0500"/>
</dbReference>
<dbReference type="KEGG" id="mja:MJ_0500"/>
<dbReference type="eggNOG" id="arCOG03216">
    <property type="taxonomic scope" value="Archaea"/>
</dbReference>
<dbReference type="HOGENOM" id="CLU_094096_0_0_2"/>
<dbReference type="InParanoid" id="Q57923"/>
<dbReference type="PhylomeDB" id="Q57923"/>
<dbReference type="Proteomes" id="UP000000805">
    <property type="component" value="Chromosome"/>
</dbReference>
<dbReference type="Gene3D" id="3.40.50.11590">
    <property type="match status" value="1"/>
</dbReference>
<dbReference type="InterPro" id="IPR007161">
    <property type="entry name" value="DUF364"/>
</dbReference>
<dbReference type="InterPro" id="IPR025251">
    <property type="entry name" value="DUF4213"/>
</dbReference>
<dbReference type="Pfam" id="PF04016">
    <property type="entry name" value="DUF364"/>
    <property type="match status" value="1"/>
</dbReference>
<dbReference type="Pfam" id="PF13938">
    <property type="entry name" value="DUF4213"/>
    <property type="match status" value="1"/>
</dbReference>
<dbReference type="SUPFAM" id="SSF159713">
    <property type="entry name" value="Dhaf3308-like"/>
    <property type="match status" value="1"/>
</dbReference>
<feature type="chain" id="PRO_0000106901" description="Uncharacterized protein MJ0500">
    <location>
        <begin position="1"/>
        <end position="259"/>
    </location>
</feature>
<name>Y500_METJA</name>
<keyword id="KW-1185">Reference proteome</keyword>